<gene>
    <name type="primary">VAC17</name>
    <name type="ordered locus">YCL063W</name>
    <name type="ORF">YCL63W/YCL62W</name>
</gene>
<accession>P25591</accession>
<accession>D6VQV5</accession>
<accession>P25590</accession>
<organism>
    <name type="scientific">Saccharomyces cerevisiae (strain ATCC 204508 / S288c)</name>
    <name type="common">Baker's yeast</name>
    <dbReference type="NCBI Taxonomy" id="559292"/>
    <lineage>
        <taxon>Eukaryota</taxon>
        <taxon>Fungi</taxon>
        <taxon>Dikarya</taxon>
        <taxon>Ascomycota</taxon>
        <taxon>Saccharomycotina</taxon>
        <taxon>Saccharomycetes</taxon>
        <taxon>Saccharomycetales</taxon>
        <taxon>Saccharomycetaceae</taxon>
        <taxon>Saccharomyces</taxon>
    </lineage>
</organism>
<sequence length="423" mass="47843">MATQALEDITERLLIRSQEAILQLDLWIQRQQRSSICQTTDQESLDKLSQQYNQYMSQLNSLYVRSESVRDKLSKEQQRRLITEDNEHQRIEDLVREFQDITLRLNELATVPNEAPNDSPQSQSTRSSLGSFQPRPLKIIERQRLCMVTPSKPPKKSVGFNPINEVDCPSKTNSLPCSPKKQPARNRTLRAAKSHDTGLNKSKKPSSSDTYESFFKNRQRLSLTFFDEMDDEDFDSDQDTIILPNISTPPHVGVTAKGAEFEPLRRYNSHESILSNKPAPSKSLNLGSFSASFFRPSNPTFGTSISNVQVNCHPTVAATMAPSRNGPRISSSKALLSSFIARSDTHTVKENNTNLKHASFMDKFNSSLSTISESFQSKRGRKNKGMNEERISNHNVAQEQKNNMDISVSIEELQDALNTELLF</sequence>
<protein>
    <recommendedName>
        <fullName>vacuole-related protein 17</fullName>
    </recommendedName>
    <alternativeName>
        <fullName>Vacuole-specific MYO2 receptor VAC17</fullName>
    </alternativeName>
</protein>
<reference key="1">
    <citation type="journal article" date="1992" name="Nature">
        <title>The complete DNA sequence of yeast chromosome III.</title>
        <authorList>
            <person name="Oliver S.G."/>
            <person name="van der Aart Q.J.M."/>
            <person name="Agostoni-Carbone M.L."/>
            <person name="Aigle M."/>
            <person name="Alberghina L."/>
            <person name="Alexandraki D."/>
            <person name="Antoine G."/>
            <person name="Anwar R."/>
            <person name="Ballesta J.P.G."/>
            <person name="Benit P."/>
            <person name="Berben G."/>
            <person name="Bergantino E."/>
            <person name="Biteau N."/>
            <person name="Bolle P.-A."/>
            <person name="Bolotin-Fukuhara M."/>
            <person name="Brown A."/>
            <person name="Brown A.J.P."/>
            <person name="Buhler J.-M."/>
            <person name="Carcano C."/>
            <person name="Carignani G."/>
            <person name="Cederberg H."/>
            <person name="Chanet R."/>
            <person name="Contreras R."/>
            <person name="Crouzet M."/>
            <person name="Daignan-Fornier B."/>
            <person name="Defoor E."/>
            <person name="Delgado M.D."/>
            <person name="Demolder J."/>
            <person name="Doira C."/>
            <person name="Dubois E."/>
            <person name="Dujon B."/>
            <person name="Duesterhoeft A."/>
            <person name="Erdmann D."/>
            <person name="Esteban M."/>
            <person name="Fabre F."/>
            <person name="Fairhead C."/>
            <person name="Faye G."/>
            <person name="Feldmann H."/>
            <person name="Fiers W."/>
            <person name="Francingues-Gaillard M.-C."/>
            <person name="Franco L."/>
            <person name="Frontali L."/>
            <person name="Fukuhara H."/>
            <person name="Fuller L.J."/>
            <person name="Galland P."/>
            <person name="Gent M.E."/>
            <person name="Gigot D."/>
            <person name="Gilliquet V."/>
            <person name="Glansdorff N."/>
            <person name="Goffeau A."/>
            <person name="Grenson M."/>
            <person name="Grisanti P."/>
            <person name="Grivell L.A."/>
            <person name="de Haan M."/>
            <person name="Haasemann M."/>
            <person name="Hatat D."/>
            <person name="Hoenicka J."/>
            <person name="Hegemann J.H."/>
            <person name="Herbert C.J."/>
            <person name="Hilger F."/>
            <person name="Hohmann S."/>
            <person name="Hollenberg C.P."/>
            <person name="Huse K."/>
            <person name="Iborra F."/>
            <person name="Indge K.J."/>
            <person name="Isono K."/>
            <person name="Jacq C."/>
            <person name="Jacquet M."/>
            <person name="James C.M."/>
            <person name="Jauniaux J.-C."/>
            <person name="Jia Y."/>
            <person name="Jimenez A."/>
            <person name="Kelly A."/>
            <person name="Kleinhans U."/>
            <person name="Kreisl P."/>
            <person name="Lanfranchi G."/>
            <person name="Lewis C."/>
            <person name="van der Linden C.G."/>
            <person name="Lucchini G."/>
            <person name="Lutzenkirchen K."/>
            <person name="Maat M.J."/>
            <person name="Mallet L."/>
            <person name="Mannhaupt G."/>
            <person name="Martegani E."/>
            <person name="Mathieu A."/>
            <person name="Maurer C.T.C."/>
            <person name="McConnell D."/>
            <person name="McKee R.A."/>
            <person name="Messenguy F."/>
            <person name="Mewes H.-W."/>
            <person name="Molemans F."/>
            <person name="Montague M.A."/>
            <person name="Muzi Falconi M."/>
            <person name="Navas L."/>
            <person name="Newlon C.S."/>
            <person name="Noone D."/>
            <person name="Pallier C."/>
            <person name="Panzeri L."/>
            <person name="Pearson B.M."/>
            <person name="Perea J."/>
            <person name="Philippsen P."/>
            <person name="Pierard A."/>
            <person name="Planta R.J."/>
            <person name="Plevani P."/>
            <person name="Poetsch B."/>
            <person name="Pohl F.M."/>
            <person name="Purnelle B."/>
            <person name="Ramezani Rad M."/>
            <person name="Rasmussen S.W."/>
            <person name="Raynal A."/>
            <person name="Remacha M.A."/>
            <person name="Richterich P."/>
            <person name="Roberts A.B."/>
            <person name="Rodriguez F."/>
            <person name="Sanz E."/>
            <person name="Schaaff-Gerstenschlaeger I."/>
            <person name="Scherens B."/>
            <person name="Schweitzer B."/>
            <person name="Shu Y."/>
            <person name="Skala J."/>
            <person name="Slonimski P.P."/>
            <person name="Sor F."/>
            <person name="Soustelle C."/>
            <person name="Spiegelberg R."/>
            <person name="Stateva L.I."/>
            <person name="Steensma H.Y."/>
            <person name="Steiner S."/>
            <person name="Thierry A."/>
            <person name="Thireos G."/>
            <person name="Tzermia M."/>
            <person name="Urrestarazu L.A."/>
            <person name="Valle G."/>
            <person name="Vetter I."/>
            <person name="van Vliet-Reedijk J.C."/>
            <person name="Voet M."/>
            <person name="Volckaert G."/>
            <person name="Vreken P."/>
            <person name="Wang H."/>
            <person name="Warmington J.R."/>
            <person name="von Wettstein D."/>
            <person name="Wicksteed B.L."/>
            <person name="Wilson C."/>
            <person name="Wurst H."/>
            <person name="Xu G."/>
            <person name="Yoshikawa A."/>
            <person name="Zimmermann F.K."/>
            <person name="Sgouros J.G."/>
        </authorList>
    </citation>
    <scope>NUCLEOTIDE SEQUENCE [LARGE SCALE GENOMIC DNA]</scope>
    <source>
        <strain>ATCC 204508 / S288c</strain>
    </source>
</reference>
<reference key="2">
    <citation type="submission" date="1996-01" db="EMBL/GenBank/DDBJ databases">
        <authorList>
            <person name="Gromadka R."/>
        </authorList>
    </citation>
    <scope>SEQUENCE REVISION</scope>
</reference>
<reference key="3">
    <citation type="journal article" date="2014" name="G3 (Bethesda)">
        <title>The reference genome sequence of Saccharomyces cerevisiae: Then and now.</title>
        <authorList>
            <person name="Engel S.R."/>
            <person name="Dietrich F.S."/>
            <person name="Fisk D.G."/>
            <person name="Binkley G."/>
            <person name="Balakrishnan R."/>
            <person name="Costanzo M.C."/>
            <person name="Dwight S.S."/>
            <person name="Hitz B.C."/>
            <person name="Karra K."/>
            <person name="Nash R.S."/>
            <person name="Weng S."/>
            <person name="Wong E.D."/>
            <person name="Lloyd P."/>
            <person name="Skrzypek M.S."/>
            <person name="Miyasato S.R."/>
            <person name="Simison M."/>
            <person name="Cherry J.M."/>
        </authorList>
    </citation>
    <scope>GENOME REANNOTATION</scope>
    <source>
        <strain>ATCC 204508 / S288c</strain>
    </source>
</reference>
<reference key="4">
    <citation type="journal article" date="2003" name="J. Cell Biol.">
        <title>Identification of an organelle-specific myosin V receptor.</title>
        <authorList>
            <person name="Ishikawa K."/>
            <person name="Catlett N.L."/>
            <person name="Novak J.L."/>
            <person name="Tang F."/>
            <person name="Nau J.J."/>
            <person name="Weisman L.S."/>
        </authorList>
    </citation>
    <scope>FUNCTION</scope>
    <scope>INTERACTION WITH MYO2 AND VAC8</scope>
</reference>
<reference key="5">
    <citation type="journal article" date="2003" name="Nature">
        <title>Regulated degradation of a class V myosin receptor directs movement of the yeast vacuole.</title>
        <authorList>
            <person name="Tang F."/>
            <person name="Kauffman E.J."/>
            <person name="Novak J.L."/>
            <person name="Nau J.J."/>
            <person name="Catlett N.L."/>
            <person name="Weisman L.S."/>
        </authorList>
    </citation>
    <scope>FUNCTION</scope>
    <scope>SUBCELLULAR LOCATION</scope>
    <scope>DOMAINS</scope>
    <scope>INTERACTION WITH MYO2 AND VAC8</scope>
</reference>
<reference key="6">
    <citation type="journal article" date="2005" name="Eukaryot. Cell">
        <title>A point mutation in the cargo-binding domain of myosin V affects its interaction with multiple cargoes.</title>
        <authorList>
            <person name="Pashkova N."/>
            <person name="Catlett N.L."/>
            <person name="Novak J.L."/>
            <person name="Weisman L.S."/>
        </authorList>
    </citation>
    <scope>INTERACTION WITH MYO2</scope>
</reference>
<reference key="7">
    <citation type="journal article" date="2005" name="J. Cell Biol.">
        <title>Myosin V attachment to cargo requires the tight association of two functional subdomains.</title>
        <authorList>
            <person name="Pashkova N."/>
            <person name="Catlett N.L."/>
            <person name="Novak J.L."/>
            <person name="Wu G."/>
            <person name="Lu R."/>
            <person name="Cohen R.E."/>
            <person name="Weisman L.S."/>
        </authorList>
    </citation>
    <scope>INTERACTION WITH MYO2</scope>
</reference>
<reference key="8">
    <citation type="journal article" date="2006" name="Traffic">
        <title>Vac8p, an armadillo repeat protein, coordinates vacuole inheritance with multiple vacuolar processes.</title>
        <authorList>
            <person name="Tang F."/>
            <person name="Peng Y."/>
            <person name="Nau J.J."/>
            <person name="Kauffman E.J."/>
            <person name="Weisman L.S."/>
        </authorList>
    </citation>
    <scope>INTERACTION WITH VAC8</scope>
</reference>
<reference key="9">
    <citation type="journal article" date="2007" name="Mol. Biol. Cell">
        <title>Atg18 regulates organelle morphology and Fab1 kinase activity independent of its membrane recruitment by phosphatidylinositol 3,5-bisphosphate.</title>
        <authorList>
            <person name="Efe J.A."/>
            <person name="Botelho R.J."/>
            <person name="Emr S.D."/>
        </authorList>
    </citation>
    <scope>INTERACTION WITH ATG18</scope>
</reference>
<reference key="10">
    <citation type="journal article" date="2008" name="Dev. Cell">
        <title>The cyclin-dependent kinase Cdk1 directly regulates vacuole inheritance.</title>
        <authorList>
            <person name="Peng Y."/>
            <person name="Weisman L.S."/>
        </authorList>
    </citation>
    <scope>PHOSPHORYLATION AT SER-119; THR-149; SER-178 AND THR-248</scope>
    <scope>INTERACTION WITH MYO2</scope>
    <scope>FUNCTION</scope>
    <scope>MUTAGENESIS OF SER-119; THR-149; SER-178; PHE-225 AND THR-248</scope>
</reference>
<reference key="11">
    <citation type="journal article" date="2009" name="Science">
        <title>Global analysis of Cdk1 substrate phosphorylation sites provides insights into evolution.</title>
        <authorList>
            <person name="Holt L.J."/>
            <person name="Tuch B.B."/>
            <person name="Villen J."/>
            <person name="Johnson A.D."/>
            <person name="Gygi S.P."/>
            <person name="Morgan D.O."/>
        </authorList>
    </citation>
    <scope>PHOSPHORYLATION [LARGE SCALE ANALYSIS] AT SER-269</scope>
    <scope>IDENTIFICATION BY MASS SPECTROMETRY [LARGE SCALE ANALYSIS]</scope>
</reference>
<reference key="12">
    <citation type="journal article" date="2012" name="Proc. Natl. Acad. Sci. U.S.A.">
        <title>N-terminal acetylome analyses and functional insights of the N-terminal acetyltransferase NatB.</title>
        <authorList>
            <person name="Van Damme P."/>
            <person name="Lasa M."/>
            <person name="Polevoda B."/>
            <person name="Gazquez C."/>
            <person name="Elosegui-Artola A."/>
            <person name="Kim D.S."/>
            <person name="De Juan-Pardo E."/>
            <person name="Demeyer K."/>
            <person name="Hole K."/>
            <person name="Larrea E."/>
            <person name="Timmerman E."/>
            <person name="Prieto J."/>
            <person name="Arnesen T."/>
            <person name="Sherman F."/>
            <person name="Gevaert K."/>
            <person name="Aldabe R."/>
        </authorList>
    </citation>
    <scope>ACETYLATION [LARGE SCALE ANALYSIS] AT ALA-2</scope>
    <scope>CLEAVAGE OF INITIATOR METHIONINE [LARGE SCALE ANALYSIS]</scope>
    <scope>IDENTIFICATION BY MASS SPECTROMETRY [LARGE SCALE ANALYSIS]</scope>
</reference>
<name>VAC17_YEAST</name>
<evidence type="ECO:0000256" key="1">
    <source>
        <dbReference type="SAM" id="MobiDB-lite"/>
    </source>
</evidence>
<evidence type="ECO:0000269" key="2">
    <source>
    </source>
</evidence>
<evidence type="ECO:0000269" key="3">
    <source>
    </source>
</evidence>
<evidence type="ECO:0000269" key="4">
    <source>
    </source>
</evidence>
<evidence type="ECO:0000269" key="5">
    <source>
    </source>
</evidence>
<evidence type="ECO:0000269" key="6">
    <source>
    </source>
</evidence>
<evidence type="ECO:0000269" key="7">
    <source>
    </source>
</evidence>
<evidence type="ECO:0000269" key="8">
    <source>
    </source>
</evidence>
<evidence type="ECO:0000305" key="9"/>
<evidence type="ECO:0007744" key="10">
    <source>
    </source>
</evidence>
<evidence type="ECO:0007744" key="11">
    <source>
    </source>
</evidence>
<evidence type="ECO:0007829" key="12">
    <source>
        <dbReference type="PDB" id="7YCJ"/>
    </source>
</evidence>
<comment type="function">
    <text evidence="2 3 8">Vacuole-specific MYO2 receptor required for vacuole inheritance. Binds simultaneously to MYO2 and to VAC8, a vacuolar membrane protein, forming a transport complex which moves the attached vacuole membrane along actin cables into the bud. Once the vacuole arrives in the bud, VAC17 is degraded, depositing the vacuole in its correct location.</text>
</comment>
<comment type="subunit">
    <text evidence="2 3 4 5 6 7 8">Interacts with MYO2 and VAC8. Interacts with ATG18.</text>
</comment>
<comment type="interaction">
    <interactant intactId="EBI-21800">
        <id>P25591</id>
    </interactant>
    <interactant intactId="EBI-11659">
        <id>P19524</id>
        <label>MYO2</label>
    </interactant>
    <organismsDiffer>false</organismsDiffer>
    <experiments>7</experiments>
</comment>
<comment type="interaction">
    <interactant intactId="EBI-21800">
        <id>P25591</id>
    </interactant>
    <interactant intactId="EBI-20212">
        <id>P39968</id>
        <label>VAC8</label>
    </interactant>
    <organismsDiffer>false</organismsDiffer>
    <experiments>3</experiments>
</comment>
<comment type="subcellular location">
    <subcellularLocation>
        <location evidence="2">Vacuole membrane</location>
        <topology evidence="2">Peripheral membrane protein</topology>
        <orientation evidence="2">Cytoplasmic side</orientation>
    </subcellularLocation>
</comment>
<comment type="similarity">
    <text evidence="9">Belongs to the VAC17 family.</text>
</comment>
<feature type="initiator methionine" description="Removed" evidence="11">
    <location>
        <position position="1"/>
    </location>
</feature>
<feature type="chain" id="PRO_0000202554" description="vacuole-related protein 17">
    <location>
        <begin position="2"/>
        <end position="423"/>
    </location>
</feature>
<feature type="region of interest" description="Disordered" evidence="1">
    <location>
        <begin position="109"/>
        <end position="134"/>
    </location>
</feature>
<feature type="region of interest" description="MYO2-binding">
    <location>
        <begin position="110"/>
        <end position="170"/>
    </location>
</feature>
<feature type="region of interest" description="Disordered" evidence="1">
    <location>
        <begin position="150"/>
        <end position="211"/>
    </location>
</feature>
<feature type="region of interest" description="VAC8-binding">
    <location>
        <begin position="290"/>
        <end position="380"/>
    </location>
</feature>
<feature type="compositionally biased region" description="Polar residues" evidence="1">
    <location>
        <begin position="116"/>
        <end position="131"/>
    </location>
</feature>
<feature type="compositionally biased region" description="Basic residues" evidence="1">
    <location>
        <begin position="182"/>
        <end position="192"/>
    </location>
</feature>
<feature type="compositionally biased region" description="Polar residues" evidence="1">
    <location>
        <begin position="199"/>
        <end position="211"/>
    </location>
</feature>
<feature type="modified residue" description="N-acetylalanine" evidence="11">
    <location>
        <position position="2"/>
    </location>
</feature>
<feature type="modified residue" description="Phosphoserine" evidence="8">
    <location>
        <position position="119"/>
    </location>
</feature>
<feature type="modified residue" description="Phosphothreonine" evidence="8">
    <location>
        <position position="149"/>
    </location>
</feature>
<feature type="modified residue" description="Phosphoserine" evidence="8">
    <location>
        <position position="178"/>
    </location>
</feature>
<feature type="modified residue" description="Phosphothreonine" evidence="8">
    <location>
        <position position="248"/>
    </location>
</feature>
<feature type="modified residue" description="Phosphoserine" evidence="10">
    <location>
        <position position="269"/>
    </location>
</feature>
<feature type="mutagenesis site" description="Impairs phosphorylation; when associated with A-149; A-178 and A-248." evidence="8">
    <original>S</original>
    <variation>A</variation>
    <location>
        <position position="119"/>
    </location>
</feature>
<feature type="mutagenesis site" description="Impairs phosphorylation; when associated with A-119; A-178 and A-248." evidence="8">
    <original>T</original>
    <variation>A</variation>
    <location>
        <position position="149"/>
    </location>
</feature>
<feature type="mutagenesis site" description="Impairs phosphorylation; when associated with A-119; A-149 and A-248." evidence="8">
    <original>S</original>
    <variation>A</variation>
    <location>
        <position position="178"/>
    </location>
</feature>
<feature type="mutagenesis site" description="Stabilizes VAC17 whose protein levels are about 10-fold higher than wild-type." evidence="8">
    <original>F</original>
    <variation>S</variation>
    <location>
        <position position="225"/>
    </location>
</feature>
<feature type="mutagenesis site" description="Impairs phosphorylation; when associated with A-119; A-149 and A-178." evidence="8">
    <original>T</original>
    <variation>A</variation>
    <location>
        <position position="248"/>
    </location>
</feature>
<feature type="helix" evidence="12">
    <location>
        <begin position="290"/>
        <end position="294"/>
    </location>
</feature>
<feature type="helix" evidence="12">
    <location>
        <begin position="332"/>
        <end position="337"/>
    </location>
</feature>
<dbReference type="EMBL" id="X59720">
    <property type="protein sequence ID" value="CAA42404.1"/>
    <property type="molecule type" value="Genomic_DNA"/>
</dbReference>
<dbReference type="EMBL" id="BK006937">
    <property type="protein sequence ID" value="DAA07424.1"/>
    <property type="molecule type" value="Genomic_DNA"/>
</dbReference>
<dbReference type="PIR" id="S74278">
    <property type="entry name" value="S74278"/>
</dbReference>
<dbReference type="RefSeq" id="NP_009870.1">
    <property type="nucleotide sequence ID" value="NM_001178705.1"/>
</dbReference>
<dbReference type="PDB" id="7YCJ">
    <property type="method" value="X-ray"/>
    <property type="resolution" value="2.10 A"/>
    <property type="chains" value="B=290-344"/>
</dbReference>
<dbReference type="PDBsum" id="7YCJ"/>
<dbReference type="SMR" id="P25591"/>
<dbReference type="BioGRID" id="30925">
    <property type="interactions" value="92"/>
</dbReference>
<dbReference type="ComplexPortal" id="CPX-1304">
    <property type="entry name" value="MYO2-VAC17-VAC8 transport complex"/>
</dbReference>
<dbReference type="DIP" id="DIP-2065N"/>
<dbReference type="FunCoup" id="P25591">
    <property type="interactions" value="48"/>
</dbReference>
<dbReference type="IntAct" id="P25591">
    <property type="interactions" value="11"/>
</dbReference>
<dbReference type="MINT" id="P25591"/>
<dbReference type="STRING" id="4932.YCL063W"/>
<dbReference type="iPTMnet" id="P25591"/>
<dbReference type="PaxDb" id="4932-YCL063W"/>
<dbReference type="PeptideAtlas" id="P25591"/>
<dbReference type="EnsemblFungi" id="YCL063W_mRNA">
    <property type="protein sequence ID" value="YCL063W"/>
    <property type="gene ID" value="YCL063W"/>
</dbReference>
<dbReference type="GeneID" id="850296"/>
<dbReference type="KEGG" id="sce:YCL063W"/>
<dbReference type="AGR" id="SGD:S000000568"/>
<dbReference type="SGD" id="S000000568">
    <property type="gene designation" value="VAC17"/>
</dbReference>
<dbReference type="VEuPathDB" id="FungiDB:YCL063W"/>
<dbReference type="eggNOG" id="ENOG502RZF2">
    <property type="taxonomic scope" value="Eukaryota"/>
</dbReference>
<dbReference type="HOGENOM" id="CLU_571186_0_0_1"/>
<dbReference type="InParanoid" id="P25591"/>
<dbReference type="OMA" id="DLWIQRQ"/>
<dbReference type="OrthoDB" id="4070503at2759"/>
<dbReference type="BioCyc" id="YEAST:G3O-29312-MONOMER"/>
<dbReference type="BioGRID-ORCS" id="850296">
    <property type="hits" value="10 hits in 10 CRISPR screens"/>
</dbReference>
<dbReference type="PRO" id="PR:P25591"/>
<dbReference type="Proteomes" id="UP000002311">
    <property type="component" value="Chromosome III"/>
</dbReference>
<dbReference type="RNAct" id="P25591">
    <property type="molecule type" value="protein"/>
</dbReference>
<dbReference type="GO" id="GO:0000329">
    <property type="term" value="C:fungal-type vacuole membrane"/>
    <property type="evidence" value="ECO:0000314"/>
    <property type="project" value="ComplexPortal"/>
</dbReference>
<dbReference type="GO" id="GO:0071563">
    <property type="term" value="C:Myo2p-Vac17p-Vac8p transport complex"/>
    <property type="evidence" value="ECO:0000353"/>
    <property type="project" value="ComplexPortal"/>
</dbReference>
<dbReference type="GO" id="GO:0043495">
    <property type="term" value="F:protein-membrane adaptor activity"/>
    <property type="evidence" value="ECO:0000353"/>
    <property type="project" value="SGD"/>
</dbReference>
<dbReference type="GO" id="GO:0000011">
    <property type="term" value="P:vacuole inheritance"/>
    <property type="evidence" value="ECO:0000314"/>
    <property type="project" value="ComplexPortal"/>
</dbReference>
<dbReference type="InterPro" id="IPR035293">
    <property type="entry name" value="Vac17"/>
</dbReference>
<dbReference type="Pfam" id="PF17321">
    <property type="entry name" value="Vac17"/>
    <property type="match status" value="1"/>
</dbReference>
<keyword id="KW-0002">3D-structure</keyword>
<keyword id="KW-0007">Acetylation</keyword>
<keyword id="KW-0472">Membrane</keyword>
<keyword id="KW-0597">Phosphoprotein</keyword>
<keyword id="KW-1185">Reference proteome</keyword>
<keyword id="KW-0926">Vacuole</keyword>
<proteinExistence type="evidence at protein level"/>